<feature type="chain" id="PRO_0000095469" description="Glutamate racemase">
    <location>
        <begin position="1"/>
        <end position="290"/>
    </location>
</feature>
<feature type="region of interest" description="Disordered" evidence="2">
    <location>
        <begin position="271"/>
        <end position="290"/>
    </location>
</feature>
<feature type="active site" description="Proton donor/acceptor" evidence="1">
    <location>
        <position position="87"/>
    </location>
</feature>
<feature type="active site" description="Proton donor/acceptor" evidence="1">
    <location>
        <position position="199"/>
    </location>
</feature>
<feature type="binding site" evidence="1">
    <location>
        <begin position="24"/>
        <end position="25"/>
    </location>
    <ligand>
        <name>substrate</name>
    </ligand>
</feature>
<feature type="binding site" evidence="1">
    <location>
        <begin position="56"/>
        <end position="57"/>
    </location>
    <ligand>
        <name>substrate</name>
    </ligand>
</feature>
<feature type="binding site" evidence="1">
    <location>
        <begin position="88"/>
        <end position="89"/>
    </location>
    <ligand>
        <name>substrate</name>
    </ligand>
</feature>
<feature type="binding site" evidence="1">
    <location>
        <begin position="200"/>
        <end position="201"/>
    </location>
    <ligand>
        <name>substrate</name>
    </ligand>
</feature>
<dbReference type="EC" id="5.1.1.3" evidence="1"/>
<dbReference type="EMBL" id="AE000513">
    <property type="protein sequence ID" value="AAF11147.1"/>
    <property type="status" value="ALT_INIT"/>
    <property type="molecule type" value="Genomic_DNA"/>
</dbReference>
<dbReference type="PIR" id="C75378">
    <property type="entry name" value="C75378"/>
</dbReference>
<dbReference type="RefSeq" id="NP_295309.1">
    <property type="nucleotide sequence ID" value="NC_001263.1"/>
</dbReference>
<dbReference type="RefSeq" id="WP_162177672.1">
    <property type="nucleotide sequence ID" value="NZ_CP150840.1"/>
</dbReference>
<dbReference type="SMR" id="Q9RU10"/>
<dbReference type="FunCoup" id="Q9RU10">
    <property type="interactions" value="215"/>
</dbReference>
<dbReference type="STRING" id="243230.DR_1586"/>
<dbReference type="PaxDb" id="243230-DR_1586"/>
<dbReference type="EnsemblBacteria" id="AAF11147">
    <property type="protein sequence ID" value="AAF11147"/>
    <property type="gene ID" value="DR_1586"/>
</dbReference>
<dbReference type="KEGG" id="dra:DR_1586"/>
<dbReference type="PATRIC" id="fig|243230.17.peg.1790"/>
<dbReference type="eggNOG" id="COG0796">
    <property type="taxonomic scope" value="Bacteria"/>
</dbReference>
<dbReference type="HOGENOM" id="CLU_052344_1_0_0"/>
<dbReference type="InParanoid" id="Q9RU10"/>
<dbReference type="OrthoDB" id="9801055at2"/>
<dbReference type="UniPathway" id="UPA00219"/>
<dbReference type="Proteomes" id="UP000002524">
    <property type="component" value="Chromosome 1"/>
</dbReference>
<dbReference type="GO" id="GO:0008881">
    <property type="term" value="F:glutamate racemase activity"/>
    <property type="evidence" value="ECO:0000318"/>
    <property type="project" value="GO_Central"/>
</dbReference>
<dbReference type="GO" id="GO:0071555">
    <property type="term" value="P:cell wall organization"/>
    <property type="evidence" value="ECO:0007669"/>
    <property type="project" value="UniProtKB-KW"/>
</dbReference>
<dbReference type="GO" id="GO:0009252">
    <property type="term" value="P:peptidoglycan biosynthetic process"/>
    <property type="evidence" value="ECO:0000318"/>
    <property type="project" value="GO_Central"/>
</dbReference>
<dbReference type="GO" id="GO:0008360">
    <property type="term" value="P:regulation of cell shape"/>
    <property type="evidence" value="ECO:0007669"/>
    <property type="project" value="UniProtKB-KW"/>
</dbReference>
<dbReference type="FunFam" id="3.40.50.1860:FF:000002">
    <property type="entry name" value="Glutamate racemase"/>
    <property type="match status" value="1"/>
</dbReference>
<dbReference type="Gene3D" id="3.40.50.1860">
    <property type="match status" value="2"/>
</dbReference>
<dbReference type="HAMAP" id="MF_00258">
    <property type="entry name" value="Glu_racemase"/>
    <property type="match status" value="1"/>
</dbReference>
<dbReference type="InterPro" id="IPR015942">
    <property type="entry name" value="Asp/Glu/hydantoin_racemase"/>
</dbReference>
<dbReference type="InterPro" id="IPR001920">
    <property type="entry name" value="Asp/Glu_race"/>
</dbReference>
<dbReference type="InterPro" id="IPR018187">
    <property type="entry name" value="Asp/Glu_racemase_AS_1"/>
</dbReference>
<dbReference type="InterPro" id="IPR033134">
    <property type="entry name" value="Asp/Glu_racemase_AS_2"/>
</dbReference>
<dbReference type="InterPro" id="IPR004391">
    <property type="entry name" value="Glu_race"/>
</dbReference>
<dbReference type="NCBIfam" id="TIGR00067">
    <property type="entry name" value="glut_race"/>
    <property type="match status" value="1"/>
</dbReference>
<dbReference type="PANTHER" id="PTHR21198">
    <property type="entry name" value="GLUTAMATE RACEMASE"/>
    <property type="match status" value="1"/>
</dbReference>
<dbReference type="PANTHER" id="PTHR21198:SF2">
    <property type="entry name" value="GLUTAMATE RACEMASE"/>
    <property type="match status" value="1"/>
</dbReference>
<dbReference type="Pfam" id="PF01177">
    <property type="entry name" value="Asp_Glu_race"/>
    <property type="match status" value="1"/>
</dbReference>
<dbReference type="SUPFAM" id="SSF53681">
    <property type="entry name" value="Aspartate/glutamate racemase"/>
    <property type="match status" value="2"/>
</dbReference>
<dbReference type="PROSITE" id="PS00923">
    <property type="entry name" value="ASP_GLU_RACEMASE_1"/>
    <property type="match status" value="1"/>
</dbReference>
<dbReference type="PROSITE" id="PS00924">
    <property type="entry name" value="ASP_GLU_RACEMASE_2"/>
    <property type="match status" value="1"/>
</dbReference>
<organism>
    <name type="scientific">Deinococcus radiodurans (strain ATCC 13939 / DSM 20539 / JCM 16871 / CCUG 27074 / LMG 4051 / NBRC 15346 / NCIMB 9279 / VKM B-1422 / R1)</name>
    <dbReference type="NCBI Taxonomy" id="243230"/>
    <lineage>
        <taxon>Bacteria</taxon>
        <taxon>Thermotogati</taxon>
        <taxon>Deinococcota</taxon>
        <taxon>Deinococci</taxon>
        <taxon>Deinococcales</taxon>
        <taxon>Deinococcaceae</taxon>
        <taxon>Deinococcus</taxon>
    </lineage>
</organism>
<sequence>MPPVSFAAASDPAPRSALPIGVFDSGAGGLSVLAELQRALPQEDVLYLADTAHVPYGARSDEDIRDLTARAVAELVRRGVKAVVVACNTASAFSLTHLRERFELPIIGLVPAVKPAVAATKSGVVGVLATPGTLRGTLLADVIRQWAEPAGVRVMQAVSTELVPLVEAGKADSPEARVVLRDVLEPLAEAGADQLVLGCTHYPFLAGSIRAEFGDTFALVDSGAAVARHTRNVLSRGGLLRGGDRTGEVSYLTTSDPAHLRALLMTLRPGGADGASLPDPPSPRIELTTT</sequence>
<reference key="1">
    <citation type="journal article" date="1999" name="Science">
        <title>Genome sequence of the radioresistant bacterium Deinococcus radiodurans R1.</title>
        <authorList>
            <person name="White O."/>
            <person name="Eisen J.A."/>
            <person name="Heidelberg J.F."/>
            <person name="Hickey E.K."/>
            <person name="Peterson J.D."/>
            <person name="Dodson R.J."/>
            <person name="Haft D.H."/>
            <person name="Gwinn M.L."/>
            <person name="Nelson W.C."/>
            <person name="Richardson D.L."/>
            <person name="Moffat K.S."/>
            <person name="Qin H."/>
            <person name="Jiang L."/>
            <person name="Pamphile W."/>
            <person name="Crosby M."/>
            <person name="Shen M."/>
            <person name="Vamathevan J.J."/>
            <person name="Lam P."/>
            <person name="McDonald L.A."/>
            <person name="Utterback T.R."/>
            <person name="Zalewski C."/>
            <person name="Makarova K.S."/>
            <person name="Aravind L."/>
            <person name="Daly M.J."/>
            <person name="Minton K.W."/>
            <person name="Fleischmann R.D."/>
            <person name="Ketchum K.A."/>
            <person name="Nelson K.E."/>
            <person name="Salzberg S.L."/>
            <person name="Smith H.O."/>
            <person name="Venter J.C."/>
            <person name="Fraser C.M."/>
        </authorList>
    </citation>
    <scope>NUCLEOTIDE SEQUENCE [LARGE SCALE GENOMIC DNA]</scope>
    <source>
        <strain>ATCC 13939 / DSM 20539 / JCM 16871 / CCUG 27074 / LMG 4051 / NBRC 15346 / NCIMB 9279 / VKM B-1422 / R1</strain>
    </source>
</reference>
<accession>Q9RU10</accession>
<protein>
    <recommendedName>
        <fullName evidence="1">Glutamate racemase</fullName>
        <ecNumber evidence="1">5.1.1.3</ecNumber>
    </recommendedName>
</protein>
<keyword id="KW-0133">Cell shape</keyword>
<keyword id="KW-0961">Cell wall biogenesis/degradation</keyword>
<keyword id="KW-0413">Isomerase</keyword>
<keyword id="KW-0573">Peptidoglycan synthesis</keyword>
<keyword id="KW-1185">Reference proteome</keyword>
<gene>
    <name evidence="1" type="primary">murI</name>
    <name type="ordered locus">DR_1586</name>
</gene>
<name>MURI_DEIRA</name>
<evidence type="ECO:0000255" key="1">
    <source>
        <dbReference type="HAMAP-Rule" id="MF_00258"/>
    </source>
</evidence>
<evidence type="ECO:0000256" key="2">
    <source>
        <dbReference type="SAM" id="MobiDB-lite"/>
    </source>
</evidence>
<evidence type="ECO:0000305" key="3"/>
<proteinExistence type="inferred from homology"/>
<comment type="function">
    <text evidence="1">Provides the (R)-glutamate required for cell wall biosynthesis.</text>
</comment>
<comment type="catalytic activity">
    <reaction evidence="1">
        <text>L-glutamate = D-glutamate</text>
        <dbReference type="Rhea" id="RHEA:12813"/>
        <dbReference type="ChEBI" id="CHEBI:29985"/>
        <dbReference type="ChEBI" id="CHEBI:29986"/>
        <dbReference type="EC" id="5.1.1.3"/>
    </reaction>
</comment>
<comment type="pathway">
    <text evidence="1">Cell wall biogenesis; peptidoglycan biosynthesis.</text>
</comment>
<comment type="similarity">
    <text evidence="1">Belongs to the aspartate/glutamate racemases family.</text>
</comment>
<comment type="sequence caution" evidence="3">
    <conflict type="erroneous initiation">
        <sequence resource="EMBL-CDS" id="AAF11147"/>
    </conflict>
</comment>